<gene>
    <name type="primary">CPYA</name>
    <name type="ORF">HCAG_08666</name>
</gene>
<organism>
    <name type="scientific">Ajellomyces capsulatus (strain NAm1 / WU24)</name>
    <name type="common">Darling's disease fungus</name>
    <name type="synonym">Histoplasma capsulatum</name>
    <dbReference type="NCBI Taxonomy" id="2059318"/>
    <lineage>
        <taxon>Eukaryota</taxon>
        <taxon>Fungi</taxon>
        <taxon>Dikarya</taxon>
        <taxon>Ascomycota</taxon>
        <taxon>Pezizomycotina</taxon>
        <taxon>Eurotiomycetes</taxon>
        <taxon>Eurotiomycetidae</taxon>
        <taxon>Onygenales</taxon>
        <taxon>Ajellomycetaceae</taxon>
        <taxon>Histoplasma</taxon>
    </lineage>
</organism>
<proteinExistence type="inferred from homology"/>
<sequence>MKSSLALALLVGGAIASGPQQQVLREPVDHPQAAETPLQKISDIFGHLSEQAGNVWEDVMDKFPDTLMDAITQTPPPKKHNRRPDSEWDHIVRGSDVQAVWVEGDAGEKHRKVGGRLDTYDLRVKAVDPSNLGVDTVKQYSGYLDDNENDKHLFYWFFESRNDPKNDPVVLWLNGGPGCSSLTGLFLELGPSSITKQLKVEYNEFSWNSNASVIFLDQPVNVGYSYSSSSVSNTQAAAKDVYALLTLFFEQFPEYSRQDFHIAGESYAGHYIPVFASEIMSHSHRNINLKSILVGNGLTDPLSQYPHYRPMACGEGGYPAVLSSSSCQAMDNALPRCLAMIQACYNTESRWSCVPASIYCNNALIGPYQRSGMNPYDVRSKCEGGSLCYTQLDDISKYLNRNAVMESLGAEVSSYESCNMDINRNFLFQGDWMQPYMRVVPTLLAQMPVLIYAGDADFICNWLGNKAWTEALEYPGHNEFAAAEMKNLTSQNHEDVRVIGQVKSAGNFTFMRLFGGGHMVPMDQPEASLEFFNRWLGGEWSDKSP</sequence>
<reference key="1">
    <citation type="journal article" date="2009" name="Genome Res.">
        <title>Comparative genomic analyses of the human fungal pathogens Coccidioides and their relatives.</title>
        <authorList>
            <person name="Sharpton T.J."/>
            <person name="Stajich J.E."/>
            <person name="Rounsley S.D."/>
            <person name="Gardner M.J."/>
            <person name="Wortman J.R."/>
            <person name="Jordar V.S."/>
            <person name="Maiti R."/>
            <person name="Kodira C.D."/>
            <person name="Neafsey D.E."/>
            <person name="Zeng Q."/>
            <person name="Hung C.-Y."/>
            <person name="McMahan C."/>
            <person name="Muszewska A."/>
            <person name="Grynberg M."/>
            <person name="Mandel M.A."/>
            <person name="Kellner E.M."/>
            <person name="Barker B.M."/>
            <person name="Galgiani J.N."/>
            <person name="Orbach M.J."/>
            <person name="Kirkland T.N."/>
            <person name="Cole G.T."/>
            <person name="Henn M.R."/>
            <person name="Birren B.W."/>
            <person name="Taylor J.W."/>
        </authorList>
    </citation>
    <scope>NUCLEOTIDE SEQUENCE [LARGE SCALE GENOMIC DNA]</scope>
    <source>
        <strain>NAm1 / WU24</strain>
    </source>
</reference>
<accession>A6RGA0</accession>
<name>CBPYA_AJECN</name>
<feature type="signal peptide" evidence="2">
    <location>
        <begin position="1"/>
        <end position="18"/>
    </location>
</feature>
<feature type="propeptide" id="PRO_0000407418" evidence="1">
    <location>
        <begin position="19"/>
        <end position="125"/>
    </location>
</feature>
<feature type="chain" id="PRO_0000407419" description="Carboxypeptidase Y homolog A">
    <location>
        <begin position="126"/>
        <end position="545"/>
    </location>
</feature>
<feature type="active site" evidence="3">
    <location>
        <position position="266"/>
    </location>
</feature>
<feature type="active site" evidence="3">
    <location>
        <position position="457"/>
    </location>
</feature>
<feature type="active site" evidence="3">
    <location>
        <position position="518"/>
    </location>
</feature>
<feature type="glycosylation site" description="N-linked (GlcNAc...) asparagine" evidence="2">
    <location>
        <position position="210"/>
    </location>
</feature>
<feature type="glycosylation site" description="N-linked (GlcNAc...) asparagine" evidence="2">
    <location>
        <position position="487"/>
    </location>
</feature>
<feature type="glycosylation site" description="N-linked (GlcNAc...) asparagine" evidence="2">
    <location>
        <position position="507"/>
    </location>
</feature>
<feature type="disulfide bond" evidence="1">
    <location>
        <begin position="179"/>
        <end position="418"/>
    </location>
</feature>
<feature type="disulfide bond" evidence="1">
    <location>
        <begin position="313"/>
        <end position="327"/>
    </location>
</feature>
<feature type="disulfide bond" evidence="1">
    <location>
        <begin position="337"/>
        <end position="360"/>
    </location>
</feature>
<feature type="disulfide bond" evidence="1">
    <location>
        <begin position="344"/>
        <end position="353"/>
    </location>
</feature>
<feature type="disulfide bond" evidence="1">
    <location>
        <begin position="382"/>
        <end position="388"/>
    </location>
</feature>
<keyword id="KW-0121">Carboxypeptidase</keyword>
<keyword id="KW-1015">Disulfide bond</keyword>
<keyword id="KW-0325">Glycoprotein</keyword>
<keyword id="KW-0378">Hydrolase</keyword>
<keyword id="KW-0645">Protease</keyword>
<keyword id="KW-1185">Reference proteome</keyword>
<keyword id="KW-0732">Signal</keyword>
<keyword id="KW-0926">Vacuole</keyword>
<keyword id="KW-0865">Zymogen</keyword>
<protein>
    <recommendedName>
        <fullName>Carboxypeptidase Y homolog A</fullName>
        <ecNumber>3.4.16.5</ecNumber>
    </recommendedName>
</protein>
<dbReference type="EC" id="3.4.16.5"/>
<dbReference type="EMBL" id="CH476666">
    <property type="protein sequence ID" value="EDN05012.1"/>
    <property type="molecule type" value="Genomic_DNA"/>
</dbReference>
<dbReference type="SMR" id="A6RGA0"/>
<dbReference type="STRING" id="339724.A6RGA0"/>
<dbReference type="ESTHER" id="ajecn-cbpya">
    <property type="family name" value="Carboxypeptidase_S10"/>
</dbReference>
<dbReference type="MEROPS" id="S10.001"/>
<dbReference type="GlyCosmos" id="A6RGA0">
    <property type="glycosylation" value="3 sites, No reported glycans"/>
</dbReference>
<dbReference type="KEGG" id="aje:HCAG_08666"/>
<dbReference type="VEuPathDB" id="FungiDB:HCAG_08666"/>
<dbReference type="HOGENOM" id="CLU_008523_10_4_1"/>
<dbReference type="OMA" id="GDWMKPF"/>
<dbReference type="OrthoDB" id="1883at299071"/>
<dbReference type="Proteomes" id="UP000009297">
    <property type="component" value="Unassembled WGS sequence"/>
</dbReference>
<dbReference type="GO" id="GO:0000324">
    <property type="term" value="C:fungal-type vacuole"/>
    <property type="evidence" value="ECO:0007669"/>
    <property type="project" value="TreeGrafter"/>
</dbReference>
<dbReference type="GO" id="GO:0004185">
    <property type="term" value="F:serine-type carboxypeptidase activity"/>
    <property type="evidence" value="ECO:0007669"/>
    <property type="project" value="UniProtKB-EC"/>
</dbReference>
<dbReference type="GO" id="GO:0006508">
    <property type="term" value="P:proteolysis"/>
    <property type="evidence" value="ECO:0007669"/>
    <property type="project" value="UniProtKB-KW"/>
</dbReference>
<dbReference type="FunFam" id="1.10.287.410:FF:000001">
    <property type="entry name" value="Carboxypeptidase Y"/>
    <property type="match status" value="1"/>
</dbReference>
<dbReference type="Gene3D" id="1.10.287.410">
    <property type="match status" value="1"/>
</dbReference>
<dbReference type="Gene3D" id="3.40.50.1820">
    <property type="entry name" value="alpha/beta hydrolase"/>
    <property type="match status" value="1"/>
</dbReference>
<dbReference type="InterPro" id="IPR029058">
    <property type="entry name" value="AB_hydrolase_fold"/>
</dbReference>
<dbReference type="InterPro" id="IPR001563">
    <property type="entry name" value="Peptidase_S10"/>
</dbReference>
<dbReference type="InterPro" id="IPR008442">
    <property type="entry name" value="Propeptide_carboxypepY"/>
</dbReference>
<dbReference type="InterPro" id="IPR018202">
    <property type="entry name" value="Ser_caboxypep_ser_AS"/>
</dbReference>
<dbReference type="PANTHER" id="PTHR11802:SF113">
    <property type="entry name" value="SERINE CARBOXYPEPTIDASE CTSA-4.1"/>
    <property type="match status" value="1"/>
</dbReference>
<dbReference type="PANTHER" id="PTHR11802">
    <property type="entry name" value="SERINE PROTEASE FAMILY S10 SERINE CARBOXYPEPTIDASE"/>
    <property type="match status" value="1"/>
</dbReference>
<dbReference type="Pfam" id="PF05388">
    <property type="entry name" value="Carbpep_Y_N"/>
    <property type="match status" value="1"/>
</dbReference>
<dbReference type="Pfam" id="PF00450">
    <property type="entry name" value="Peptidase_S10"/>
    <property type="match status" value="1"/>
</dbReference>
<dbReference type="PRINTS" id="PR00724">
    <property type="entry name" value="CRBOXYPTASEC"/>
</dbReference>
<dbReference type="SUPFAM" id="SSF53474">
    <property type="entry name" value="alpha/beta-Hydrolases"/>
    <property type="match status" value="1"/>
</dbReference>
<dbReference type="PROSITE" id="PS00131">
    <property type="entry name" value="CARBOXYPEPT_SER_SER"/>
    <property type="match status" value="1"/>
</dbReference>
<evidence type="ECO:0000250" key="1"/>
<evidence type="ECO:0000255" key="2"/>
<evidence type="ECO:0000255" key="3">
    <source>
        <dbReference type="PROSITE-ProRule" id="PRU10074"/>
    </source>
</evidence>
<evidence type="ECO:0000305" key="4"/>
<comment type="function">
    <text evidence="1">Vacuolar carboxypeptidase involved in degradation of small peptides. Digests preferentially peptides containing an aliphatic or hydrophobic residue in P1' position, as well as methionine, leucine or phenylalanine in P1 position of ester substrate (By similarity).</text>
</comment>
<comment type="catalytic activity">
    <reaction evidence="3">
        <text>Release of a C-terminal amino acid with broad specificity.</text>
        <dbReference type="EC" id="3.4.16.5"/>
    </reaction>
</comment>
<comment type="subcellular location">
    <subcellularLocation>
        <location evidence="1">Vacuole</location>
    </subcellularLocation>
</comment>
<comment type="similarity">
    <text evidence="4">Belongs to the peptidase S10 family.</text>
</comment>